<proteinExistence type="inferred from homology"/>
<sequence length="44" mass="4681">MGNPKKNSKDFAPNHIGTQSKKAGGNKGKQMQDQTGKQPIVDNG</sequence>
<evidence type="ECO:0000255" key="1">
    <source>
        <dbReference type="HAMAP-Rule" id="MF_01505"/>
    </source>
</evidence>
<evidence type="ECO:0000256" key="2">
    <source>
        <dbReference type="SAM" id="MobiDB-lite"/>
    </source>
</evidence>
<reference key="1">
    <citation type="submission" date="2009-02" db="EMBL/GenBank/DDBJ databases">
        <title>Genome sequence of Bacillus cereus 03BB102.</title>
        <authorList>
            <person name="Dodson R.J."/>
            <person name="Jackson P."/>
            <person name="Munk A.C."/>
            <person name="Brettin T."/>
            <person name="Bruce D."/>
            <person name="Detter C."/>
            <person name="Tapia R."/>
            <person name="Han C."/>
            <person name="Sutton G."/>
            <person name="Sims D."/>
        </authorList>
    </citation>
    <scope>NUCLEOTIDE SEQUENCE [LARGE SCALE GENOMIC DNA]</scope>
    <source>
        <strain>03BB102</strain>
    </source>
</reference>
<feature type="chain" id="PRO_1000185028" description="Small, acid-soluble spore protein N">
    <location>
        <begin position="1"/>
        <end position="44"/>
    </location>
</feature>
<feature type="region of interest" description="Disordered" evidence="2">
    <location>
        <begin position="1"/>
        <end position="44"/>
    </location>
</feature>
<gene>
    <name evidence="1" type="primary">sspN</name>
    <name type="ordered locus">BCA_3702</name>
</gene>
<name>SSPN_BACC3</name>
<keyword id="KW-0749">Sporulation</keyword>
<organism>
    <name type="scientific">Bacillus cereus (strain 03BB102)</name>
    <dbReference type="NCBI Taxonomy" id="572264"/>
    <lineage>
        <taxon>Bacteria</taxon>
        <taxon>Bacillati</taxon>
        <taxon>Bacillota</taxon>
        <taxon>Bacilli</taxon>
        <taxon>Bacillales</taxon>
        <taxon>Bacillaceae</taxon>
        <taxon>Bacillus</taxon>
        <taxon>Bacillus cereus group</taxon>
    </lineage>
</organism>
<accession>C1EN49</accession>
<protein>
    <recommendedName>
        <fullName evidence="1">Small, acid-soluble spore protein N</fullName>
        <shortName evidence="1">SASP N</shortName>
    </recommendedName>
</protein>
<comment type="subcellular location">
    <subcellularLocation>
        <location evidence="1">Spore core</location>
    </subcellularLocation>
</comment>
<comment type="induction">
    <text evidence="1">Expressed only in the forespore compartment of sporulating cells.</text>
</comment>
<comment type="similarity">
    <text evidence="1">Belongs to the SspN family.</text>
</comment>
<dbReference type="EMBL" id="CP001407">
    <property type="protein sequence ID" value="ACO28578.1"/>
    <property type="molecule type" value="Genomic_DNA"/>
</dbReference>
<dbReference type="RefSeq" id="WP_000527987.1">
    <property type="nucleotide sequence ID" value="NZ_CP009318.1"/>
</dbReference>
<dbReference type="GeneID" id="93007574"/>
<dbReference type="KEGG" id="bcx:BCA_3702"/>
<dbReference type="PATRIC" id="fig|572264.18.peg.3663"/>
<dbReference type="Proteomes" id="UP000002210">
    <property type="component" value="Chromosome"/>
</dbReference>
<dbReference type="GO" id="GO:0042601">
    <property type="term" value="C:endospore-forming forespore"/>
    <property type="evidence" value="ECO:0007669"/>
    <property type="project" value="InterPro"/>
</dbReference>
<dbReference type="GO" id="GO:0030436">
    <property type="term" value="P:asexual sporulation"/>
    <property type="evidence" value="ECO:0007669"/>
    <property type="project" value="UniProtKB-UniRule"/>
</dbReference>
<dbReference type="GO" id="GO:0030435">
    <property type="term" value="P:sporulation resulting in formation of a cellular spore"/>
    <property type="evidence" value="ECO:0007669"/>
    <property type="project" value="UniProtKB-KW"/>
</dbReference>
<dbReference type="HAMAP" id="MF_01505">
    <property type="entry name" value="SspN"/>
    <property type="match status" value="1"/>
</dbReference>
<dbReference type="InterPro" id="IPR012612">
    <property type="entry name" value="SASP_SspN"/>
</dbReference>
<dbReference type="NCBIfam" id="NF006904">
    <property type="entry name" value="PRK09398.1"/>
    <property type="match status" value="1"/>
</dbReference>
<dbReference type="Pfam" id="PF08177">
    <property type="entry name" value="SspN"/>
    <property type="match status" value="1"/>
</dbReference>